<reference key="1">
    <citation type="journal article" date="2003" name="J. Biol. Chem.">
        <title>Cloning and developmental analysis of murid spermatid-specific thioredoxin-2 (SPTRX-2), a novel sperm fibrous sheath protein and autoantigen.</title>
        <authorList>
            <person name="Miranda-Vizuete A."/>
            <person name="Tsang K."/>
            <person name="Yu Y."/>
            <person name="Jimenez A."/>
            <person name="Pelto-Huikko M."/>
            <person name="Flickinger C.J."/>
            <person name="Sutovsky P."/>
            <person name="Oko R."/>
        </authorList>
    </citation>
    <scope>NUCLEOTIDE SEQUENCE [MRNA] (ISOFORMS 1 AND 2)</scope>
    <scope>SUBCELLULAR LOCATION</scope>
    <scope>TISSUE SPECIFICITY</scope>
    <scope>DEVELOPMENTAL STAGE</scope>
    <scope>FUNCTION</scope>
    <source>
        <strain>Sprague-Dawley</strain>
    </source>
</reference>
<accession>Q715S9</accession>
<sequence>MASKKREVQLQSVVNSQNLWDEMLLNKGLTVIDVYQAWCGPCKAVQALFRKLKNELNEDELLHFVVAEADSIVTLQPFRDKCEPVFLFSLNGKIIAKIQGANAPLINRKVIALIDEEKKIAAGEMARPQYVEIPLVDSLDEEYGEVHYESNVEVYNMAVINPDAVLMRKNLEIKEKITKEGFIIEIQENMLLPEEVAREFYNHMIDEPDFEEFVYSMTNRLSCVLIISQGEDTEVIEEEALPQSDDEEEPDPLEEPHVRFAPMLVKKKRDSLQEYMDRQHMSDYCHVEDDAVKVSKFIDILFPDFKTMKSTNVQRTLGLLYPEVCEEEKDNVLDIIQNEGFTILMQRQVVLSEEEARAVCHVHEDEDYFDNLIGYMCSNNSYILVLMREHSVERWKELIGPKTVEEAYASHPDSLCVRFASGNFPVNQFYGSSSKAAAETEIEHFFPPQSTLALIKPHVSHKERMEILKAIRDARFELTQMKEMHLTPEHASKVYFKITGKDFYKNVLDVLSSGMSVVMILTKWNAVGEWRRMMGPVDPEEAKLLSPNSLRARYGIDVLRNAVHGASNMSEAATAISNVFTESNFEN</sequence>
<comment type="function">
    <text evidence="1 6">Probably required during the final stages of sperm tail maturation in the testis and/or epididymis, where extensive disulfide bonding of fibrous sheath (FS) proteins occurs (Probable). In vitro, it has neither nucleoside diphosphate kinase (NDPK) activity nor reducing activity on disulfide bonds. Exhibits a 3'-5' exonuclease activity with a preference for single-stranded DNA, suggesting roles in DNA proofreading and repair (By similarity).</text>
</comment>
<comment type="subunit">
    <text evidence="1">Monomer.</text>
</comment>
<comment type="subcellular location">
    <subcellularLocation>
        <location evidence="3">Cytoplasm</location>
    </subcellularLocation>
    <text>In spermatozoa, it is an integral component of the FS.</text>
</comment>
<comment type="alternative products">
    <event type="alternative splicing"/>
    <isoform>
        <id>Q715S9-1</id>
        <name>1</name>
        <sequence type="displayed"/>
    </isoform>
    <isoform>
        <id>Q715S9-2</id>
        <name>2</name>
        <sequence type="described" ref="VSP_014332"/>
    </isoform>
</comment>
<comment type="tissue specificity">
    <text evidence="3">Testis-specific.</text>
</comment>
<comment type="developmental stage">
    <text evidence="3">Prominently detected in the cytoplasmic lobe of step 15-18 spermatids and diminishes in step 19 just before spermiation. In the spermatid tail, it increases from step 15 to 19 and is confined to the principal piece. First detected scattered throughout the cytoplasm of the axoneme in step 14-15 spermatids, but begins to be incorporated by step 16 into the FS. During steps 17-18, it increases over the ribs and columns of the assembled FS. It peaks in step 19 and remains in the FS of epididymal spermatozoa.</text>
</comment>
<comment type="domain">
    <text evidence="5">Contains 3 inactive NDK domains that do not possess all residues considered to be crucial for the NDPK activity.</text>
</comment>
<comment type="miscellaneous">
    <text evidence="3">In vasectomized rats, autoantibodies against Txndc3 are present.</text>
</comment>
<comment type="similarity">
    <text evidence="5">In the C-terminal section; belongs to the NDK family.</text>
</comment>
<comment type="sequence caution" evidence="5">
    <conflict type="erroneous initiation">
        <sequence resource="EMBL-CDS" id="AAQ12344"/>
    </conflict>
    <text>Truncated N-terminus.</text>
</comment>
<name>TXND3_RAT</name>
<protein>
    <recommendedName>
        <fullName>Thioredoxin domain-containing protein 3</fullName>
    </recommendedName>
    <alternativeName>
        <fullName>3'-5' exonuclease NME8</fullName>
        <ecNumber evidence="1">3.1.-.-</ecNumber>
    </alternativeName>
    <alternativeName>
        <fullName>NME/NM23 family member 8</fullName>
    </alternativeName>
    <alternativeName>
        <fullName evidence="4">Spermatid-specific thioredoxin-2</fullName>
        <shortName evidence="4">Sptrx-2</shortName>
    </alternativeName>
</protein>
<dbReference type="EC" id="3.1.-.-" evidence="1"/>
<dbReference type="EMBL" id="AF548544">
    <property type="protein sequence ID" value="AAQ12344.1"/>
    <property type="status" value="ALT_INIT"/>
    <property type="molecule type" value="mRNA"/>
</dbReference>
<dbReference type="SMR" id="Q715S9"/>
<dbReference type="FunCoup" id="Q715S9">
    <property type="interactions" value="3"/>
</dbReference>
<dbReference type="STRING" id="10116.ENSRNOP00000069890"/>
<dbReference type="PhosphoSitePlus" id="Q715S9"/>
<dbReference type="PaxDb" id="10116-ENSRNOP00000062434"/>
<dbReference type="UCSC" id="RGD:735069">
    <molecule id="Q715S9-1"/>
    <property type="organism name" value="rat"/>
</dbReference>
<dbReference type="AGR" id="RGD:735069"/>
<dbReference type="RGD" id="735069">
    <property type="gene designation" value="Nme8"/>
</dbReference>
<dbReference type="VEuPathDB" id="HostDB:ENSRNOG00000058285"/>
<dbReference type="eggNOG" id="KOG0888">
    <property type="taxonomic scope" value="Eukaryota"/>
</dbReference>
<dbReference type="eggNOG" id="KOG0907">
    <property type="taxonomic scope" value="Eukaryota"/>
</dbReference>
<dbReference type="HOGENOM" id="CLU_016708_0_0_1"/>
<dbReference type="InParanoid" id="Q715S9"/>
<dbReference type="PhylomeDB" id="Q715S9"/>
<dbReference type="TreeFam" id="TF106374"/>
<dbReference type="PRO" id="PR:Q715S9"/>
<dbReference type="Proteomes" id="UP000002494">
    <property type="component" value="Chromosome 17"/>
</dbReference>
<dbReference type="Bgee" id="ENSRNOG00000058285">
    <property type="expression patterns" value="Expressed in testis and 3 other cell types or tissues"/>
</dbReference>
<dbReference type="ExpressionAtlas" id="Q715S9">
    <property type="expression patterns" value="baseline"/>
</dbReference>
<dbReference type="GO" id="GO:0005930">
    <property type="term" value="C:axoneme"/>
    <property type="evidence" value="ECO:0000266"/>
    <property type="project" value="RGD"/>
</dbReference>
<dbReference type="GO" id="GO:0005737">
    <property type="term" value="C:cytoplasm"/>
    <property type="evidence" value="ECO:0000266"/>
    <property type="project" value="RGD"/>
</dbReference>
<dbReference type="GO" id="GO:0005634">
    <property type="term" value="C:nucleus"/>
    <property type="evidence" value="ECO:0000266"/>
    <property type="project" value="RGD"/>
</dbReference>
<dbReference type="GO" id="GO:0036157">
    <property type="term" value="C:outer dynein arm"/>
    <property type="evidence" value="ECO:0000266"/>
    <property type="project" value="RGD"/>
</dbReference>
<dbReference type="GO" id="GO:0097598">
    <property type="term" value="C:sperm cytoplasmic droplet"/>
    <property type="evidence" value="ECO:0000266"/>
    <property type="project" value="RGD"/>
</dbReference>
<dbReference type="GO" id="GO:0035686">
    <property type="term" value="C:sperm fibrous sheath"/>
    <property type="evidence" value="ECO:0000314"/>
    <property type="project" value="MGI"/>
</dbReference>
<dbReference type="GO" id="GO:0097225">
    <property type="term" value="C:sperm midpiece"/>
    <property type="evidence" value="ECO:0000266"/>
    <property type="project" value="RGD"/>
</dbReference>
<dbReference type="GO" id="GO:0097228">
    <property type="term" value="C:sperm principal piece"/>
    <property type="evidence" value="ECO:0000266"/>
    <property type="project" value="RGD"/>
</dbReference>
<dbReference type="GO" id="GO:0008408">
    <property type="term" value="F:3'-5' exonuclease activity"/>
    <property type="evidence" value="ECO:0000250"/>
    <property type="project" value="UniProtKB"/>
</dbReference>
<dbReference type="GO" id="GO:0008017">
    <property type="term" value="F:microtubule binding"/>
    <property type="evidence" value="ECO:0000266"/>
    <property type="project" value="RGD"/>
</dbReference>
<dbReference type="GO" id="GO:0034614">
    <property type="term" value="P:cellular response to reactive oxygen species"/>
    <property type="evidence" value="ECO:0000266"/>
    <property type="project" value="RGD"/>
</dbReference>
<dbReference type="GO" id="GO:0060271">
    <property type="term" value="P:cilium assembly"/>
    <property type="evidence" value="ECO:0000266"/>
    <property type="project" value="RGD"/>
</dbReference>
<dbReference type="GO" id="GO:0030317">
    <property type="term" value="P:flagellated sperm motility"/>
    <property type="evidence" value="ECO:0000266"/>
    <property type="project" value="RGD"/>
</dbReference>
<dbReference type="GO" id="GO:0007286">
    <property type="term" value="P:spermatid development"/>
    <property type="evidence" value="ECO:0000303"/>
    <property type="project" value="RGD"/>
</dbReference>
<dbReference type="CDD" id="cd00595">
    <property type="entry name" value="NDPk"/>
    <property type="match status" value="1"/>
</dbReference>
<dbReference type="CDD" id="cd04416">
    <property type="entry name" value="NDPk_TX"/>
    <property type="match status" value="1"/>
</dbReference>
<dbReference type="CDD" id="cd02948">
    <property type="entry name" value="TRX_NDPK"/>
    <property type="match status" value="1"/>
</dbReference>
<dbReference type="FunFam" id="3.30.70.141:FF:000012">
    <property type="entry name" value="Thioredoxin domain-containing protein 3"/>
    <property type="match status" value="1"/>
</dbReference>
<dbReference type="FunFam" id="3.30.70.141:FF:000022">
    <property type="entry name" value="Thioredoxin domain-containing protein 3"/>
    <property type="match status" value="1"/>
</dbReference>
<dbReference type="Gene3D" id="3.40.30.10">
    <property type="entry name" value="Glutaredoxin"/>
    <property type="match status" value="1"/>
</dbReference>
<dbReference type="Gene3D" id="3.30.70.141">
    <property type="entry name" value="Nucleoside diphosphate kinase-like domain"/>
    <property type="match status" value="3"/>
</dbReference>
<dbReference type="InterPro" id="IPR034907">
    <property type="entry name" value="NDK-like_dom"/>
</dbReference>
<dbReference type="InterPro" id="IPR036850">
    <property type="entry name" value="NDK-like_dom_sf"/>
</dbReference>
<dbReference type="InterPro" id="IPR036249">
    <property type="entry name" value="Thioredoxin-like_sf"/>
</dbReference>
<dbReference type="InterPro" id="IPR017937">
    <property type="entry name" value="Thioredoxin_CS"/>
</dbReference>
<dbReference type="InterPro" id="IPR013766">
    <property type="entry name" value="Thioredoxin_domain"/>
</dbReference>
<dbReference type="InterPro" id="IPR051766">
    <property type="entry name" value="TXND_domain-containing"/>
</dbReference>
<dbReference type="PANTHER" id="PTHR46135">
    <property type="entry name" value="NME/NM23 FAMILY MEMBER 8"/>
    <property type="match status" value="1"/>
</dbReference>
<dbReference type="PANTHER" id="PTHR46135:SF2">
    <property type="entry name" value="THIOREDOXIN DOMAIN-CONTAINING PROTEIN 3"/>
    <property type="match status" value="1"/>
</dbReference>
<dbReference type="Pfam" id="PF00334">
    <property type="entry name" value="NDK"/>
    <property type="match status" value="3"/>
</dbReference>
<dbReference type="Pfam" id="PF00085">
    <property type="entry name" value="Thioredoxin"/>
    <property type="match status" value="1"/>
</dbReference>
<dbReference type="SMART" id="SM00562">
    <property type="entry name" value="NDK"/>
    <property type="match status" value="2"/>
</dbReference>
<dbReference type="SUPFAM" id="SSF54919">
    <property type="entry name" value="Nucleoside diphosphate kinase, NDK"/>
    <property type="match status" value="3"/>
</dbReference>
<dbReference type="SUPFAM" id="SSF52833">
    <property type="entry name" value="Thioredoxin-like"/>
    <property type="match status" value="1"/>
</dbReference>
<dbReference type="PROSITE" id="PS51374">
    <property type="entry name" value="NDPK_LIKE"/>
    <property type="match status" value="3"/>
</dbReference>
<dbReference type="PROSITE" id="PS00194">
    <property type="entry name" value="THIOREDOXIN_1"/>
    <property type="match status" value="1"/>
</dbReference>
<dbReference type="PROSITE" id="PS51352">
    <property type="entry name" value="THIOREDOXIN_2"/>
    <property type="match status" value="1"/>
</dbReference>
<feature type="chain" id="PRO_0000120158" description="Thioredoxin domain-containing protein 3">
    <location>
        <begin position="1"/>
        <end position="587"/>
    </location>
</feature>
<feature type="domain" description="Thioredoxin" evidence="2">
    <location>
        <begin position="2"/>
        <end position="119"/>
    </location>
</feature>
<feature type="region of interest" description="NDK" evidence="5">
    <location>
        <begin position="157"/>
        <end position="255"/>
    </location>
</feature>
<feature type="region of interest" description="NDK" evidence="5">
    <location>
        <begin position="313"/>
        <end position="453"/>
    </location>
</feature>
<feature type="region of interest" description="NDK" evidence="5">
    <location>
        <begin position="454"/>
        <end position="587"/>
    </location>
</feature>
<feature type="disulfide bond" description="Redox-active" evidence="2">
    <location>
        <begin position="39"/>
        <end position="42"/>
    </location>
</feature>
<feature type="splice variant" id="VSP_014332" description="In isoform 2." evidence="4">
    <location>
        <begin position="154"/>
        <end position="207"/>
    </location>
</feature>
<keyword id="KW-0025">Alternative splicing</keyword>
<keyword id="KW-0963">Cytoplasm</keyword>
<keyword id="KW-0217">Developmental protein</keyword>
<keyword id="KW-0221">Differentiation</keyword>
<keyword id="KW-1015">Disulfide bond</keyword>
<keyword id="KW-0378">Hydrolase</keyword>
<keyword id="KW-1185">Reference proteome</keyword>
<keyword id="KW-0677">Repeat</keyword>
<keyword id="KW-0744">Spermatogenesis</keyword>
<organism>
    <name type="scientific">Rattus norvegicus</name>
    <name type="common">Rat</name>
    <dbReference type="NCBI Taxonomy" id="10116"/>
    <lineage>
        <taxon>Eukaryota</taxon>
        <taxon>Metazoa</taxon>
        <taxon>Chordata</taxon>
        <taxon>Craniata</taxon>
        <taxon>Vertebrata</taxon>
        <taxon>Euteleostomi</taxon>
        <taxon>Mammalia</taxon>
        <taxon>Eutheria</taxon>
        <taxon>Euarchontoglires</taxon>
        <taxon>Glires</taxon>
        <taxon>Rodentia</taxon>
        <taxon>Myomorpha</taxon>
        <taxon>Muroidea</taxon>
        <taxon>Muridae</taxon>
        <taxon>Murinae</taxon>
        <taxon>Rattus</taxon>
    </lineage>
</organism>
<gene>
    <name type="primary">Nme8</name>
    <name type="synonym">Sptrx2</name>
    <name type="synonym">Txndc3</name>
</gene>
<proteinExistence type="evidence at transcript level"/>
<evidence type="ECO:0000250" key="1">
    <source>
        <dbReference type="UniProtKB" id="Q8N427"/>
    </source>
</evidence>
<evidence type="ECO:0000255" key="2">
    <source>
        <dbReference type="PROSITE-ProRule" id="PRU00691"/>
    </source>
</evidence>
<evidence type="ECO:0000269" key="3">
    <source>
    </source>
</evidence>
<evidence type="ECO:0000303" key="4">
    <source>
    </source>
</evidence>
<evidence type="ECO:0000305" key="5"/>
<evidence type="ECO:0000305" key="6">
    <source>
    </source>
</evidence>